<evidence type="ECO:0000255" key="1">
    <source>
        <dbReference type="HAMAP-Rule" id="MF_01864"/>
    </source>
</evidence>
<evidence type="ECO:0000255" key="2">
    <source>
        <dbReference type="PROSITE-ProRule" id="PRU01266"/>
    </source>
</evidence>
<comment type="function">
    <text evidence="1">Catalyzes the methylthiolation of N6-(dimethylallyl)adenosine (i(6)A), leading to the formation of 2-methylthio-N6-(dimethylallyl)adenosine (ms(2)i(6)A) at position 37 in tRNAs that read codons beginning with uridine.</text>
</comment>
<comment type="catalytic activity">
    <reaction evidence="1">
        <text>N(6)-dimethylallyladenosine(37) in tRNA + (sulfur carrier)-SH + AH2 + 2 S-adenosyl-L-methionine = 2-methylsulfanyl-N(6)-dimethylallyladenosine(37) in tRNA + (sulfur carrier)-H + 5'-deoxyadenosine + L-methionine + A + S-adenosyl-L-homocysteine + 2 H(+)</text>
        <dbReference type="Rhea" id="RHEA:37067"/>
        <dbReference type="Rhea" id="RHEA-COMP:10375"/>
        <dbReference type="Rhea" id="RHEA-COMP:10376"/>
        <dbReference type="Rhea" id="RHEA-COMP:14737"/>
        <dbReference type="Rhea" id="RHEA-COMP:14739"/>
        <dbReference type="ChEBI" id="CHEBI:13193"/>
        <dbReference type="ChEBI" id="CHEBI:15378"/>
        <dbReference type="ChEBI" id="CHEBI:17319"/>
        <dbReference type="ChEBI" id="CHEBI:17499"/>
        <dbReference type="ChEBI" id="CHEBI:29917"/>
        <dbReference type="ChEBI" id="CHEBI:57844"/>
        <dbReference type="ChEBI" id="CHEBI:57856"/>
        <dbReference type="ChEBI" id="CHEBI:59789"/>
        <dbReference type="ChEBI" id="CHEBI:64428"/>
        <dbReference type="ChEBI" id="CHEBI:74415"/>
        <dbReference type="ChEBI" id="CHEBI:74417"/>
        <dbReference type="EC" id="2.8.4.3"/>
    </reaction>
</comment>
<comment type="cofactor">
    <cofactor evidence="1">
        <name>[4Fe-4S] cluster</name>
        <dbReference type="ChEBI" id="CHEBI:49883"/>
    </cofactor>
    <text evidence="1">Binds 2 [4Fe-4S] clusters. One cluster is coordinated with 3 cysteines and an exchangeable S-adenosyl-L-methionine.</text>
</comment>
<comment type="subunit">
    <text evidence="1">Monomer.</text>
</comment>
<comment type="subcellular location">
    <subcellularLocation>
        <location evidence="1">Cytoplasm</location>
    </subcellularLocation>
</comment>
<comment type="similarity">
    <text evidence="1">Belongs to the methylthiotransferase family. MiaB subfamily.</text>
</comment>
<organism>
    <name type="scientific">Prochlorococcus marinus (strain AS9601)</name>
    <dbReference type="NCBI Taxonomy" id="146891"/>
    <lineage>
        <taxon>Bacteria</taxon>
        <taxon>Bacillati</taxon>
        <taxon>Cyanobacteriota</taxon>
        <taxon>Cyanophyceae</taxon>
        <taxon>Synechococcales</taxon>
        <taxon>Prochlorococcaceae</taxon>
        <taxon>Prochlorococcus</taxon>
    </lineage>
</organism>
<name>MIAB_PROMS</name>
<keyword id="KW-0004">4Fe-4S</keyword>
<keyword id="KW-0963">Cytoplasm</keyword>
<keyword id="KW-0408">Iron</keyword>
<keyword id="KW-0411">Iron-sulfur</keyword>
<keyword id="KW-0479">Metal-binding</keyword>
<keyword id="KW-0949">S-adenosyl-L-methionine</keyword>
<keyword id="KW-0808">Transferase</keyword>
<keyword id="KW-0819">tRNA processing</keyword>
<reference key="1">
    <citation type="journal article" date="2007" name="PLoS Genet.">
        <title>Patterns and implications of gene gain and loss in the evolution of Prochlorococcus.</title>
        <authorList>
            <person name="Kettler G.C."/>
            <person name="Martiny A.C."/>
            <person name="Huang K."/>
            <person name="Zucker J."/>
            <person name="Coleman M.L."/>
            <person name="Rodrigue S."/>
            <person name="Chen F."/>
            <person name="Lapidus A."/>
            <person name="Ferriera S."/>
            <person name="Johnson J."/>
            <person name="Steglich C."/>
            <person name="Church G.M."/>
            <person name="Richardson P."/>
            <person name="Chisholm S.W."/>
        </authorList>
    </citation>
    <scope>NUCLEOTIDE SEQUENCE [LARGE SCALE GENOMIC DNA]</scope>
    <source>
        <strain>AS9601</strain>
    </source>
</reference>
<sequence length="464" mass="52770">MLTNTKPDEKIFQKNSTTGSYWITTFGCQMNKADSERMAGTLEKMGYTRADNELNADLVLYNTCTIRDNAEQKVYSFLGRQAKRKHKTPSLKLVVAGCLAQQEGESLLRRVPELDLVMGPQHVNNLENLLGKVDLGNQVAATEENFISEDITSARRESSICGWVNIIYGCNERCSYCVVPSVRGKEQSRYPNAIKSEIQKLAGDNFKEITLLGQNIDAYGRDLPGTTKEGRKENTLTDLLYYIHDVKGIRRIRFATSHPRYFSKRLIQACYELDKVCEHFHIPFQSGNDEILKQMSRGYTIKKYKNIIENIRSLMPDASITADAIVAFPGETEKQYQDTLKLITEIGFDQVNTAAYSPRPNTPAAVWSNQLSEEVKKARLQEINDLVEKTARSRNKRYINNIESVLIEGLNPKNSSQIMGRTRTNRLTFVEIPKNIDFNFSLGDEIDVRINETRPFSLTGELYL</sequence>
<protein>
    <recommendedName>
        <fullName evidence="1">tRNA-2-methylthio-N(6)-dimethylallyladenosine synthase</fullName>
        <ecNumber evidence="1">2.8.4.3</ecNumber>
    </recommendedName>
    <alternativeName>
        <fullName evidence="1">(Dimethylallyl)adenosine tRNA methylthiotransferase MiaB</fullName>
    </alternativeName>
    <alternativeName>
        <fullName evidence="1">tRNA-i(6)A37 methylthiotransferase</fullName>
    </alternativeName>
</protein>
<dbReference type="EC" id="2.8.4.3" evidence="1"/>
<dbReference type="EMBL" id="CP000551">
    <property type="protein sequence ID" value="ABM70787.1"/>
    <property type="molecule type" value="Genomic_DNA"/>
</dbReference>
<dbReference type="RefSeq" id="WP_011818923.1">
    <property type="nucleotide sequence ID" value="NC_008816.1"/>
</dbReference>
<dbReference type="SMR" id="A2BSM6"/>
<dbReference type="STRING" id="146891.A9601_15041"/>
<dbReference type="KEGG" id="pmb:A9601_15041"/>
<dbReference type="eggNOG" id="COG0621">
    <property type="taxonomic scope" value="Bacteria"/>
</dbReference>
<dbReference type="HOGENOM" id="CLU_018697_2_2_3"/>
<dbReference type="OrthoDB" id="9805215at2"/>
<dbReference type="Proteomes" id="UP000002590">
    <property type="component" value="Chromosome"/>
</dbReference>
<dbReference type="GO" id="GO:0005737">
    <property type="term" value="C:cytoplasm"/>
    <property type="evidence" value="ECO:0007669"/>
    <property type="project" value="UniProtKB-SubCell"/>
</dbReference>
<dbReference type="GO" id="GO:0051539">
    <property type="term" value="F:4 iron, 4 sulfur cluster binding"/>
    <property type="evidence" value="ECO:0007669"/>
    <property type="project" value="UniProtKB-UniRule"/>
</dbReference>
<dbReference type="GO" id="GO:0046872">
    <property type="term" value="F:metal ion binding"/>
    <property type="evidence" value="ECO:0007669"/>
    <property type="project" value="UniProtKB-KW"/>
</dbReference>
<dbReference type="GO" id="GO:0035596">
    <property type="term" value="F:methylthiotransferase activity"/>
    <property type="evidence" value="ECO:0007669"/>
    <property type="project" value="InterPro"/>
</dbReference>
<dbReference type="GO" id="GO:0035600">
    <property type="term" value="P:tRNA methylthiolation"/>
    <property type="evidence" value="ECO:0007669"/>
    <property type="project" value="TreeGrafter"/>
</dbReference>
<dbReference type="CDD" id="cd01335">
    <property type="entry name" value="Radical_SAM"/>
    <property type="match status" value="1"/>
</dbReference>
<dbReference type="FunFam" id="3.40.50.12160:FF:000006">
    <property type="entry name" value="tRNA-2-methylthio-N(6)-dimethylallyladenosine synthase"/>
    <property type="match status" value="1"/>
</dbReference>
<dbReference type="FunFam" id="3.80.30.20:FF:000001">
    <property type="entry name" value="tRNA-2-methylthio-N(6)-dimethylallyladenosine synthase 2"/>
    <property type="match status" value="1"/>
</dbReference>
<dbReference type="Gene3D" id="3.40.50.12160">
    <property type="entry name" value="Methylthiotransferase, N-terminal domain"/>
    <property type="match status" value="1"/>
</dbReference>
<dbReference type="Gene3D" id="3.80.30.20">
    <property type="entry name" value="tm_1862 like domain"/>
    <property type="match status" value="1"/>
</dbReference>
<dbReference type="HAMAP" id="MF_01864">
    <property type="entry name" value="tRNA_metthiotr_MiaB"/>
    <property type="match status" value="1"/>
</dbReference>
<dbReference type="InterPro" id="IPR006638">
    <property type="entry name" value="Elp3/MiaA/NifB-like_rSAM"/>
</dbReference>
<dbReference type="InterPro" id="IPR005839">
    <property type="entry name" value="Methylthiotransferase"/>
</dbReference>
<dbReference type="InterPro" id="IPR020612">
    <property type="entry name" value="Methylthiotransferase_CS"/>
</dbReference>
<dbReference type="InterPro" id="IPR013848">
    <property type="entry name" value="Methylthiotransferase_N"/>
</dbReference>
<dbReference type="InterPro" id="IPR038135">
    <property type="entry name" value="Methylthiotransferase_N_sf"/>
</dbReference>
<dbReference type="InterPro" id="IPR006463">
    <property type="entry name" value="MiaB_methiolase"/>
</dbReference>
<dbReference type="InterPro" id="IPR007197">
    <property type="entry name" value="rSAM"/>
</dbReference>
<dbReference type="InterPro" id="IPR023404">
    <property type="entry name" value="rSAM_horseshoe"/>
</dbReference>
<dbReference type="InterPro" id="IPR002792">
    <property type="entry name" value="TRAM_dom"/>
</dbReference>
<dbReference type="NCBIfam" id="TIGR01574">
    <property type="entry name" value="miaB-methiolase"/>
    <property type="match status" value="1"/>
</dbReference>
<dbReference type="NCBIfam" id="TIGR00089">
    <property type="entry name" value="MiaB/RimO family radical SAM methylthiotransferase"/>
    <property type="match status" value="1"/>
</dbReference>
<dbReference type="PANTHER" id="PTHR43020">
    <property type="entry name" value="CDK5 REGULATORY SUBUNIT-ASSOCIATED PROTEIN 1"/>
    <property type="match status" value="1"/>
</dbReference>
<dbReference type="PANTHER" id="PTHR43020:SF2">
    <property type="entry name" value="MITOCHONDRIAL TRNA METHYLTHIOTRANSFERASE CDK5RAP1"/>
    <property type="match status" value="1"/>
</dbReference>
<dbReference type="Pfam" id="PF04055">
    <property type="entry name" value="Radical_SAM"/>
    <property type="match status" value="1"/>
</dbReference>
<dbReference type="Pfam" id="PF01938">
    <property type="entry name" value="TRAM"/>
    <property type="match status" value="1"/>
</dbReference>
<dbReference type="Pfam" id="PF00919">
    <property type="entry name" value="UPF0004"/>
    <property type="match status" value="1"/>
</dbReference>
<dbReference type="SFLD" id="SFLDF00273">
    <property type="entry name" value="(dimethylallyl)adenosine_tRNA"/>
    <property type="match status" value="1"/>
</dbReference>
<dbReference type="SFLD" id="SFLDG01082">
    <property type="entry name" value="B12-binding_domain_containing"/>
    <property type="match status" value="1"/>
</dbReference>
<dbReference type="SFLD" id="SFLDS00029">
    <property type="entry name" value="Radical_SAM"/>
    <property type="match status" value="1"/>
</dbReference>
<dbReference type="SMART" id="SM00729">
    <property type="entry name" value="Elp3"/>
    <property type="match status" value="1"/>
</dbReference>
<dbReference type="SUPFAM" id="SSF102114">
    <property type="entry name" value="Radical SAM enzymes"/>
    <property type="match status" value="1"/>
</dbReference>
<dbReference type="PROSITE" id="PS51449">
    <property type="entry name" value="MTTASE_N"/>
    <property type="match status" value="1"/>
</dbReference>
<dbReference type="PROSITE" id="PS01278">
    <property type="entry name" value="MTTASE_RADICAL"/>
    <property type="match status" value="1"/>
</dbReference>
<dbReference type="PROSITE" id="PS51918">
    <property type="entry name" value="RADICAL_SAM"/>
    <property type="match status" value="1"/>
</dbReference>
<dbReference type="PROSITE" id="PS50926">
    <property type="entry name" value="TRAM"/>
    <property type="match status" value="1"/>
</dbReference>
<feature type="chain" id="PRO_0000374444" description="tRNA-2-methylthio-N(6)-dimethylallyladenosine synthase">
    <location>
        <begin position="1"/>
        <end position="464"/>
    </location>
</feature>
<feature type="domain" description="MTTase N-terminal" evidence="1">
    <location>
        <begin position="19"/>
        <end position="135"/>
    </location>
</feature>
<feature type="domain" description="Radical SAM core" evidence="2">
    <location>
        <begin position="156"/>
        <end position="394"/>
    </location>
</feature>
<feature type="domain" description="TRAM" evidence="1">
    <location>
        <begin position="396"/>
        <end position="464"/>
    </location>
</feature>
<feature type="binding site" evidence="1">
    <location>
        <position position="28"/>
    </location>
    <ligand>
        <name>[4Fe-4S] cluster</name>
        <dbReference type="ChEBI" id="CHEBI:49883"/>
        <label>1</label>
    </ligand>
</feature>
<feature type="binding site" evidence="1">
    <location>
        <position position="64"/>
    </location>
    <ligand>
        <name>[4Fe-4S] cluster</name>
        <dbReference type="ChEBI" id="CHEBI:49883"/>
        <label>1</label>
    </ligand>
</feature>
<feature type="binding site" evidence="1">
    <location>
        <position position="98"/>
    </location>
    <ligand>
        <name>[4Fe-4S] cluster</name>
        <dbReference type="ChEBI" id="CHEBI:49883"/>
        <label>1</label>
    </ligand>
</feature>
<feature type="binding site" evidence="1">
    <location>
        <position position="170"/>
    </location>
    <ligand>
        <name>[4Fe-4S] cluster</name>
        <dbReference type="ChEBI" id="CHEBI:49883"/>
        <label>2</label>
        <note>4Fe-4S-S-AdoMet</note>
    </ligand>
</feature>
<feature type="binding site" evidence="1">
    <location>
        <position position="174"/>
    </location>
    <ligand>
        <name>[4Fe-4S] cluster</name>
        <dbReference type="ChEBI" id="CHEBI:49883"/>
        <label>2</label>
        <note>4Fe-4S-S-AdoMet</note>
    </ligand>
</feature>
<feature type="binding site" evidence="1">
    <location>
        <position position="177"/>
    </location>
    <ligand>
        <name>[4Fe-4S] cluster</name>
        <dbReference type="ChEBI" id="CHEBI:49883"/>
        <label>2</label>
        <note>4Fe-4S-S-AdoMet</note>
    </ligand>
</feature>
<proteinExistence type="inferred from homology"/>
<gene>
    <name evidence="1" type="primary">miaB</name>
    <name type="ordered locus">A9601_15041</name>
</gene>
<accession>A2BSM6</accession>